<dbReference type="EMBL" id="AJ414696">
    <property type="protein sequence ID" value="CAC93996.1"/>
    <property type="molecule type" value="Genomic_DNA"/>
</dbReference>
<dbReference type="EMBL" id="AJ748296">
    <property type="protein sequence ID" value="CAG38860.1"/>
    <property type="molecule type" value="Genomic_DNA"/>
</dbReference>
<dbReference type="RefSeq" id="NP_666629.1">
    <property type="nucleotide sequence ID" value="NC_004087.1"/>
</dbReference>
<dbReference type="KEGG" id="vg:951398"/>
<dbReference type="OrthoDB" id="17527at10239"/>
<dbReference type="Proteomes" id="UP000002270">
    <property type="component" value="Genome"/>
</dbReference>
<dbReference type="Proteomes" id="UP000223181">
    <property type="component" value="Segment"/>
</dbReference>
<proteinExistence type="predicted"/>
<keyword id="KW-1185">Reference proteome</keyword>
<feature type="chain" id="PRO_0000342295" description="Uncharacterized protein 252">
    <location>
        <begin position="1"/>
        <end position="252"/>
    </location>
</feature>
<reference key="1">
    <citation type="journal article" date="2001" name="Virology">
        <title>Sequences and replication of genomes of the archaeal rudiviruses SIRV1 and SIRV2: relationships to the archaeal lipothrixvirus SIFV and some eukaryal viruses.</title>
        <authorList>
            <person name="Peng X."/>
            <person name="Blum H."/>
            <person name="She Q."/>
            <person name="Mallok S."/>
            <person name="Bruegger K."/>
            <person name="Garrett R.A."/>
            <person name="Zillig W."/>
            <person name="Prangishvili D."/>
        </authorList>
    </citation>
    <scope>NUCLEOTIDE SEQUENCE [LARGE SCALE GENOMIC DNA]</scope>
    <source>
        <strain>Isolate variant VIII</strain>
    </source>
</reference>
<reference key="2">
    <citation type="journal article" date="2004" name="Mol. Microbiol.">
        <title>Multiple variants of the archaeal DNA rudivirus SIRV1 in a single host and a novel mechanism of genomic variation.</title>
        <authorList>
            <person name="Peng X."/>
            <person name="Kessler A."/>
            <person name="Phan H."/>
            <person name="Garrett R.A."/>
            <person name="Prangishvili D."/>
        </authorList>
    </citation>
    <scope>NUCLEOTIDE SEQUENCE [LARGE SCALE GENOMIC DNA]</scope>
    <source>
        <strain>Isolate variant XX</strain>
    </source>
</reference>
<protein>
    <recommendedName>
        <fullName>Uncharacterized protein 252</fullName>
    </recommendedName>
</protein>
<gene>
    <name type="ORF">252</name>
</gene>
<sequence length="252" mass="29523">MNKVEVSVRKKLNNLPKVFLDIYLNKFTLDKNYINCVHYVSRSGLTQEGCVTGYTVGSMLKIDTLKEVKGIYYVPHPSIINITFRQKAIRNLDDLKQFLMSLDVSKISPRQPWLLVKYSNYSIEVFDIYFKGLIYEFPLLAEQGHLRIYSVPEPKDVYLLYYDNDGQKREINKELFTEVSEFMIFNHKVTFDKSILMFKNLYVTPGSGTLLYVPEDVHVKLESSDHKEVEVNVNRDTWLLFSHTRPRRSGQD</sequence>
<organismHost>
    <name type="scientific">Saccharolobus islandicus</name>
    <name type="common">Sulfolobus islandicus</name>
    <dbReference type="NCBI Taxonomy" id="43080"/>
</organismHost>
<organism>
    <name type="scientific">Sulfolobus islandicus rod-shaped virus 1</name>
    <name type="common">SIRV-1</name>
    <name type="synonym">Sulfolobus virus SIRV-1</name>
    <dbReference type="NCBI Taxonomy" id="157898"/>
    <lineage>
        <taxon>Viruses</taxon>
        <taxon>Adnaviria</taxon>
        <taxon>Zilligvirae</taxon>
        <taxon>Taleaviricota</taxon>
        <taxon>Tokiviricetes</taxon>
        <taxon>Ligamenvirales</taxon>
        <taxon>Rudiviridae</taxon>
        <taxon>Icerudivirus</taxon>
        <taxon>Icerudivirus SIRV1</taxon>
    </lineage>
</organism>
<name>Y252_SIRV1</name>
<accession>Q8QL15</accession>
<accession>Q5TJ78</accession>